<gene>
    <name evidence="5" type="primary">desC</name>
    <name evidence="5" type="ORF">EMD_0001</name>
</gene>
<proteinExistence type="evidence at protein level"/>
<name>DESC_ASPDE</name>
<organism>
    <name type="scientific">Aspergillus desertorum</name>
    <name type="common">Emericella desertorum</name>
    <dbReference type="NCBI Taxonomy" id="1810909"/>
    <lineage>
        <taxon>Eukaryota</taxon>
        <taxon>Fungi</taxon>
        <taxon>Dikarya</taxon>
        <taxon>Ascomycota</taxon>
        <taxon>Pezizomycotina</taxon>
        <taxon>Eurotiomycetes</taxon>
        <taxon>Eurotiomycetidae</taxon>
        <taxon>Eurotiales</taxon>
        <taxon>Aspergillaceae</taxon>
        <taxon>Aspergillus</taxon>
        <taxon>Aspergillus subgen. Nidulantes</taxon>
    </lineage>
</organism>
<protein>
    <recommendedName>
        <fullName evidence="5">Bicoumarin synthase desC</fullName>
        <ecNumber evidence="4">1.14.-.-</ecNumber>
    </recommendedName>
    <alternativeName>
        <fullName evidence="5">Cytochrome P450 monooxygenase desC</fullName>
    </alternativeName>
    <alternativeName>
        <fullName evidence="5">Desertorin biosynthesis cluster protein C</fullName>
    </alternativeName>
</protein>
<accession>A0A0N9HKQ7</accession>
<comment type="function">
    <text evidence="4">Non-reducing polyketide synthase; part of the gene cluster that mediates the biosynthesis of the bicoumarin desertorin (PubMed:26389790). The non-reducing polyketide synthase desS first catalyzes the formation of the pentaketidic 4,7-dihydroxy-5-methylcoumarin from acetyl coenzyme A and 4 malonyl coenzyme A molecules (PubMed:26389790). Further O-methylation by desB leads to the formation of 7-demethylsiderin (PubMed:26389790). Then, an oxidative phenol coupling catalyzed by the cytochrome P450 monooxygenase desC forms the 6,8'-dimer M-desertorin A via dimerization the monomeric precursor, 7-demethylsiderin (PubMed:26389790). M-desertorin A is further converted to M-desertorin C (PubMed:26389790).</text>
</comment>
<comment type="catalytic activity">
    <reaction evidence="4">
        <text>2 7-demethylsiderin + NADPH + O2 = desertorin A + NADP(+) + 2 H2O</text>
        <dbReference type="Rhea" id="RHEA:62804"/>
        <dbReference type="ChEBI" id="CHEBI:15377"/>
        <dbReference type="ChEBI" id="CHEBI:15379"/>
        <dbReference type="ChEBI" id="CHEBI:57783"/>
        <dbReference type="ChEBI" id="CHEBI:58349"/>
        <dbReference type="ChEBI" id="CHEBI:145991"/>
        <dbReference type="ChEBI" id="CHEBI:145993"/>
    </reaction>
    <physiologicalReaction direction="left-to-right" evidence="4">
        <dbReference type="Rhea" id="RHEA:62805"/>
    </physiologicalReaction>
</comment>
<comment type="cofactor">
    <cofactor evidence="1">
        <name>heme</name>
        <dbReference type="ChEBI" id="CHEBI:30413"/>
    </cofactor>
</comment>
<comment type="pathway">
    <text evidence="4">Secondary metabolite biosynthesis.</text>
</comment>
<comment type="subcellular location">
    <subcellularLocation>
        <location evidence="2">Membrane</location>
        <topology evidence="2">Single-pass membrane protein</topology>
    </subcellularLocation>
</comment>
<comment type="similarity">
    <text evidence="6">Belongs to the cytochrome P450 family.</text>
</comment>
<feature type="chain" id="PRO_0000442169" description="Bicoumarin synthase desC">
    <location>
        <begin position="1"/>
        <end position="536"/>
    </location>
</feature>
<feature type="transmembrane region" description="Helical" evidence="2">
    <location>
        <begin position="12"/>
        <end position="32"/>
    </location>
</feature>
<feature type="binding site" description="axial binding residue" evidence="1">
    <location>
        <position position="480"/>
    </location>
    <ligand>
        <name>heme</name>
        <dbReference type="ChEBI" id="CHEBI:30413"/>
    </ligand>
    <ligandPart>
        <name>Fe</name>
        <dbReference type="ChEBI" id="CHEBI:18248"/>
    </ligandPart>
</feature>
<feature type="glycosylation site" description="N-linked (GlcNAc...) asparagine" evidence="3">
    <location>
        <position position="149"/>
    </location>
</feature>
<feature type="glycosylation site" description="N-linked (GlcNAc...) asparagine" evidence="3">
    <location>
        <position position="371"/>
    </location>
</feature>
<evidence type="ECO:0000250" key="1">
    <source>
        <dbReference type="UniProtKB" id="P04798"/>
    </source>
</evidence>
<evidence type="ECO:0000255" key="2"/>
<evidence type="ECO:0000255" key="3">
    <source>
        <dbReference type="PROSITE-ProRule" id="PRU00498"/>
    </source>
</evidence>
<evidence type="ECO:0000269" key="4">
    <source>
    </source>
</evidence>
<evidence type="ECO:0000303" key="5">
    <source>
    </source>
</evidence>
<evidence type="ECO:0000305" key="6"/>
<reference key="1">
    <citation type="journal article" date="2015" name="J. Am. Chem. Soc.">
        <title>Cytochrome P450-catalyzed regio- and stereoselective phenol coupling of fungal natural products.</title>
        <authorList>
            <person name="Mazzaferro L.S."/>
            <person name="Huettel W."/>
            <person name="Fries A."/>
            <person name="Mueller M."/>
        </authorList>
    </citation>
    <scope>NUCLEOTIDE SEQUENCE [GENOMIC DNA]</scope>
    <scope>FUNCTION</scope>
    <scope>CATALYTIC ACTIVITY</scope>
    <scope>PATHWAY</scope>
    <source>
        <strain>CBS 653.73 / NBRC 30840</strain>
    </source>
</reference>
<sequence length="536" mass="60207">MGALSEIFTAGYVALAGITGFFLVFLGFLVVISDYIDGWRSRRALGDIPIVDEGSNLSPILRWNSQPYDAEAEFTRAYYKYSKNGKPFAARIQHGGYAIVLPPSACRKVRSIGHEQLSFLDALAEFADLSLHMDVTSRRVIEATHACNNETTIKNFQERLALECGKHLAPVFDPPQEQESTELKTLKSVFAAISAVATALILGPDCPEALVSEVTAGATAYNEVMIQCRILRAQYPKILKPLVWRFSRTARELRAILSRLKARLVPEIKRRIAYLEAHSTSENQAESAGSFSLLDILIQTSFKNRHLPSTPVENDKWADLLCQQALLYHFKLSRAPGTSVTFMLYRVMNHPEYATMLRDEMIAALKPSGGNWTADILQRAPKLESFNKETFRMHDISNFVGLRVAMRPVDLRSVSPPLHLKPGTMIMTPSRTVHYDAEHYVDPLTFNGLRFYDATSNTCTPRVFTTSPTYLPFSHGTGSCPARNFATQIARMLFIRLLMGYEFELANEEMPAYGLMDGTAYFPNPEVRMRVRVRGK</sequence>
<keyword id="KW-0325">Glycoprotein</keyword>
<keyword id="KW-0349">Heme</keyword>
<keyword id="KW-0408">Iron</keyword>
<keyword id="KW-0472">Membrane</keyword>
<keyword id="KW-0479">Metal-binding</keyword>
<keyword id="KW-0503">Monooxygenase</keyword>
<keyword id="KW-0560">Oxidoreductase</keyword>
<keyword id="KW-0812">Transmembrane</keyword>
<keyword id="KW-1133">Transmembrane helix</keyword>
<dbReference type="EC" id="1.14.-.-" evidence="4"/>
<dbReference type="EMBL" id="KT583602">
    <property type="protein sequence ID" value="ALG03236.1"/>
    <property type="molecule type" value="Genomic_DNA"/>
</dbReference>
<dbReference type="SMR" id="A0A0N9HKQ7"/>
<dbReference type="GlyCosmos" id="A0A0N9HKQ7">
    <property type="glycosylation" value="2 sites, No reported glycans"/>
</dbReference>
<dbReference type="GO" id="GO:0016020">
    <property type="term" value="C:membrane"/>
    <property type="evidence" value="ECO:0007669"/>
    <property type="project" value="UniProtKB-SubCell"/>
</dbReference>
<dbReference type="GO" id="GO:0020037">
    <property type="term" value="F:heme binding"/>
    <property type="evidence" value="ECO:0007669"/>
    <property type="project" value="InterPro"/>
</dbReference>
<dbReference type="GO" id="GO:0005506">
    <property type="term" value="F:iron ion binding"/>
    <property type="evidence" value="ECO:0007669"/>
    <property type="project" value="InterPro"/>
</dbReference>
<dbReference type="GO" id="GO:0004497">
    <property type="term" value="F:monooxygenase activity"/>
    <property type="evidence" value="ECO:0007669"/>
    <property type="project" value="UniProtKB-KW"/>
</dbReference>
<dbReference type="GO" id="GO:0016705">
    <property type="term" value="F:oxidoreductase activity, acting on paired donors, with incorporation or reduction of molecular oxygen"/>
    <property type="evidence" value="ECO:0007669"/>
    <property type="project" value="InterPro"/>
</dbReference>
<dbReference type="GO" id="GO:0019748">
    <property type="term" value="P:secondary metabolic process"/>
    <property type="evidence" value="ECO:0007669"/>
    <property type="project" value="UniProtKB-ARBA"/>
</dbReference>
<dbReference type="CDD" id="cd11041">
    <property type="entry name" value="CYP503A1-like"/>
    <property type="match status" value="1"/>
</dbReference>
<dbReference type="Gene3D" id="1.10.630.10">
    <property type="entry name" value="Cytochrome P450"/>
    <property type="match status" value="1"/>
</dbReference>
<dbReference type="InterPro" id="IPR001128">
    <property type="entry name" value="Cyt_P450"/>
</dbReference>
<dbReference type="InterPro" id="IPR002403">
    <property type="entry name" value="Cyt_P450_E_grp-IV"/>
</dbReference>
<dbReference type="InterPro" id="IPR036396">
    <property type="entry name" value="Cyt_P450_sf"/>
</dbReference>
<dbReference type="PANTHER" id="PTHR46206">
    <property type="entry name" value="CYTOCHROME P450"/>
    <property type="match status" value="1"/>
</dbReference>
<dbReference type="PANTHER" id="PTHR46206:SF7">
    <property type="entry name" value="P450, PUTATIVE (EUROFUNG)-RELATED"/>
    <property type="match status" value="1"/>
</dbReference>
<dbReference type="Pfam" id="PF00067">
    <property type="entry name" value="p450"/>
    <property type="match status" value="1"/>
</dbReference>
<dbReference type="PRINTS" id="PR00465">
    <property type="entry name" value="EP450IV"/>
</dbReference>
<dbReference type="SUPFAM" id="SSF48264">
    <property type="entry name" value="Cytochrome P450"/>
    <property type="match status" value="1"/>
</dbReference>